<keyword id="KW-0967">Endosome</keyword>
<keyword id="KW-0597">Phosphoprotein</keyword>
<keyword id="KW-1185">Reference proteome</keyword>
<reference key="1">
    <citation type="journal article" date="2005" name="BMC Genomics">
        <title>Characterization of 954 bovine full-CDS cDNA sequences.</title>
        <authorList>
            <person name="Harhay G.P."/>
            <person name="Sonstegard T.S."/>
            <person name="Keele J.W."/>
            <person name="Heaton M.P."/>
            <person name="Clawson M.L."/>
            <person name="Snelling W.M."/>
            <person name="Wiedmann R.T."/>
            <person name="Van Tassell C.P."/>
            <person name="Smith T.P.L."/>
        </authorList>
    </citation>
    <scope>NUCLEOTIDE SEQUENCE [LARGE SCALE MRNA]</scope>
</reference>
<reference key="2">
    <citation type="submission" date="2005-08" db="EMBL/GenBank/DDBJ databases">
        <authorList>
            <consortium name="NIH - Mammalian Gene Collection (MGC) project"/>
        </authorList>
    </citation>
    <scope>NUCLEOTIDE SEQUENCE [LARGE SCALE MRNA]</scope>
    <source>
        <strain>Hereford</strain>
        <tissue>Thymus</tissue>
    </source>
</reference>
<accession>Q5E948</accession>
<accession>Q3ZBB3</accession>
<evidence type="ECO:0000250" key="1">
    <source>
        <dbReference type="UniProtKB" id="Q9CRD0"/>
    </source>
</evidence>
<evidence type="ECO:0000250" key="2">
    <source>
        <dbReference type="UniProtKB" id="Q9NX40"/>
    </source>
</evidence>
<evidence type="ECO:0000256" key="3">
    <source>
        <dbReference type="SAM" id="MobiDB-lite"/>
    </source>
</evidence>
<evidence type="ECO:0000305" key="4"/>
<comment type="function">
    <text evidence="1">Maintains stem cell potency (By similarity). Increases STAT3 phosphorylation and controls ERK phosphorylation (By similarity). May act as a scaffold, increasing STAT3 recruitment onto endosomes (By similarity).</text>
</comment>
<comment type="subunit">
    <text evidence="1 2">Interacts with OCIAD2 (By similarity). Interacts with STAT3.</text>
</comment>
<comment type="subcellular location">
    <subcellularLocation>
        <location evidence="1">Endosome</location>
    </subcellularLocation>
</comment>
<comment type="domain">
    <text evidence="1">The OCIA domain is necessary and sufficient for endosomal localization.</text>
</comment>
<comment type="miscellaneous">
    <text>'Asrij' stands for 'blood' in Sanskrit as this protein is strongly expressed in blood vessels.</text>
</comment>
<comment type="similarity">
    <text evidence="4">Belongs to the OCIAD1 family.</text>
</comment>
<gene>
    <name type="primary">Ociad1</name>
    <name evidence="1" type="synonym">Asrij</name>
</gene>
<feature type="chain" id="PRO_0000299381" description="OCIA domain-containing protein 1">
    <location>
        <begin position="1"/>
        <end position="247"/>
    </location>
</feature>
<feature type="domain" description="OCIA">
    <location>
        <begin position="1"/>
        <end position="112"/>
    </location>
</feature>
<feature type="region of interest" description="Disordered" evidence="3">
    <location>
        <begin position="113"/>
        <end position="150"/>
    </location>
</feature>
<feature type="region of interest" description="Disordered" evidence="3">
    <location>
        <begin position="171"/>
        <end position="198"/>
    </location>
</feature>
<feature type="region of interest" description="Disordered" evidence="3">
    <location>
        <begin position="217"/>
        <end position="247"/>
    </location>
</feature>
<feature type="compositionally biased region" description="Polar residues" evidence="3">
    <location>
        <begin position="119"/>
        <end position="146"/>
    </location>
</feature>
<feature type="compositionally biased region" description="Basic and acidic residues" evidence="3">
    <location>
        <begin position="217"/>
        <end position="240"/>
    </location>
</feature>
<feature type="modified residue" description="Phosphoserine" evidence="2">
    <location>
        <position position="108"/>
    </location>
</feature>
<feature type="modified residue" description="Phosphoserine" evidence="2">
    <location>
        <position position="116"/>
    </location>
</feature>
<feature type="modified residue" description="Phosphoserine" evidence="2">
    <location>
        <position position="123"/>
    </location>
</feature>
<feature type="modified residue" description="Phosphoserine" evidence="2">
    <location>
        <position position="193"/>
    </location>
</feature>
<feature type="sequence conflict" description="In Ref. 2; AAI03461." evidence="4" ref="2">
    <original>A</original>
    <variation>T</variation>
    <location>
        <position position="12"/>
    </location>
</feature>
<name>OCAD1_BOVIN</name>
<proteinExistence type="evidence at transcript level"/>
<dbReference type="EMBL" id="BT021072">
    <property type="protein sequence ID" value="AAX09089.1"/>
    <property type="molecule type" value="mRNA"/>
</dbReference>
<dbReference type="EMBL" id="BC103460">
    <property type="protein sequence ID" value="AAI03461.1"/>
    <property type="molecule type" value="mRNA"/>
</dbReference>
<dbReference type="RefSeq" id="NP_001015648.1">
    <property type="nucleotide sequence ID" value="NM_001015648.1"/>
</dbReference>
<dbReference type="RefSeq" id="XP_005208017.1">
    <property type="nucleotide sequence ID" value="XM_005207960.2"/>
</dbReference>
<dbReference type="RefSeq" id="XP_005208022.1">
    <property type="nucleotide sequence ID" value="XM_005207965.3"/>
</dbReference>
<dbReference type="RefSeq" id="XP_010804434.1">
    <property type="nucleotide sequence ID" value="XM_010806132.2"/>
</dbReference>
<dbReference type="RefSeq" id="XP_010804435.1">
    <property type="nucleotide sequence ID" value="XM_010806133.2"/>
</dbReference>
<dbReference type="FunCoup" id="Q5E948">
    <property type="interactions" value="2528"/>
</dbReference>
<dbReference type="STRING" id="9913.ENSBTAP00000014028"/>
<dbReference type="PaxDb" id="9913-ENSBTAP00000014028"/>
<dbReference type="GeneID" id="533520"/>
<dbReference type="KEGG" id="bta:533520"/>
<dbReference type="CTD" id="54940"/>
<dbReference type="eggNOG" id="ENOG502RXQR">
    <property type="taxonomic scope" value="Eukaryota"/>
</dbReference>
<dbReference type="HOGENOM" id="CLU_083038_0_0_1"/>
<dbReference type="InParanoid" id="Q5E948"/>
<dbReference type="OrthoDB" id="6513616at2759"/>
<dbReference type="TreeFam" id="TF327106"/>
<dbReference type="Proteomes" id="UP000009136">
    <property type="component" value="Unplaced"/>
</dbReference>
<dbReference type="GO" id="GO:0005768">
    <property type="term" value="C:endosome"/>
    <property type="evidence" value="ECO:0000250"/>
    <property type="project" value="UniProtKB"/>
</dbReference>
<dbReference type="GO" id="GO:2000736">
    <property type="term" value="P:regulation of stem cell differentiation"/>
    <property type="evidence" value="ECO:0000250"/>
    <property type="project" value="UniProtKB"/>
</dbReference>
<dbReference type="InterPro" id="IPR040187">
    <property type="entry name" value="OCAD1/2"/>
</dbReference>
<dbReference type="InterPro" id="IPR009764">
    <property type="entry name" value="OCIA_dom"/>
</dbReference>
<dbReference type="PANTHER" id="PTHR13336:SF4">
    <property type="entry name" value="OCIA DOMAIN-CONTAINING PROTEIN 1"/>
    <property type="match status" value="1"/>
</dbReference>
<dbReference type="PANTHER" id="PTHR13336">
    <property type="entry name" value="OVARIAN CARCINOMA IMMUNOREACTIVE ANTIGEN"/>
    <property type="match status" value="1"/>
</dbReference>
<dbReference type="Pfam" id="PF07051">
    <property type="entry name" value="OCIA"/>
    <property type="match status" value="1"/>
</dbReference>
<sequence length="247" mass="27829">MNGRADFREPNAEVPRPIPHIGADYIPTEEERRVFAECNDESFWFRSVPLAATSMLITQGLISKGILSSHPKYGSIPKLIFACIMGYFAGKLSYVKTCQEKFKNLENSPLGEALRSGQARRSSPTGHYSQRSKYDSNVSGHSSFGTSPAADNLEKEMLPHYEPIPFSASLNESTPTGITDHIAQGPDPNTEESPKRKNITYEELRNKNRESYEVTLTHKTDPSVRPMQERMPKKEVKVNKYGDTWDE</sequence>
<organism>
    <name type="scientific">Bos taurus</name>
    <name type="common">Bovine</name>
    <dbReference type="NCBI Taxonomy" id="9913"/>
    <lineage>
        <taxon>Eukaryota</taxon>
        <taxon>Metazoa</taxon>
        <taxon>Chordata</taxon>
        <taxon>Craniata</taxon>
        <taxon>Vertebrata</taxon>
        <taxon>Euteleostomi</taxon>
        <taxon>Mammalia</taxon>
        <taxon>Eutheria</taxon>
        <taxon>Laurasiatheria</taxon>
        <taxon>Artiodactyla</taxon>
        <taxon>Ruminantia</taxon>
        <taxon>Pecora</taxon>
        <taxon>Bovidae</taxon>
        <taxon>Bovinae</taxon>
        <taxon>Bos</taxon>
    </lineage>
</organism>
<protein>
    <recommendedName>
        <fullName>OCIA domain-containing protein 1</fullName>
    </recommendedName>
</protein>